<reference key="1">
    <citation type="journal article" date="2004" name="Nat. Genet.">
        <title>Complete sequencing and characterization of 21,243 full-length human cDNAs.</title>
        <authorList>
            <person name="Ota T."/>
            <person name="Suzuki Y."/>
            <person name="Nishikawa T."/>
            <person name="Otsuki T."/>
            <person name="Sugiyama T."/>
            <person name="Irie R."/>
            <person name="Wakamatsu A."/>
            <person name="Hayashi K."/>
            <person name="Sato H."/>
            <person name="Nagai K."/>
            <person name="Kimura K."/>
            <person name="Makita H."/>
            <person name="Sekine M."/>
            <person name="Obayashi M."/>
            <person name="Nishi T."/>
            <person name="Shibahara T."/>
            <person name="Tanaka T."/>
            <person name="Ishii S."/>
            <person name="Yamamoto J."/>
            <person name="Saito K."/>
            <person name="Kawai Y."/>
            <person name="Isono Y."/>
            <person name="Nakamura Y."/>
            <person name="Nagahari K."/>
            <person name="Murakami K."/>
            <person name="Yasuda T."/>
            <person name="Iwayanagi T."/>
            <person name="Wagatsuma M."/>
            <person name="Shiratori A."/>
            <person name="Sudo H."/>
            <person name="Hosoiri T."/>
            <person name="Kaku Y."/>
            <person name="Kodaira H."/>
            <person name="Kondo H."/>
            <person name="Sugawara M."/>
            <person name="Takahashi M."/>
            <person name="Kanda K."/>
            <person name="Yokoi T."/>
            <person name="Furuya T."/>
            <person name="Kikkawa E."/>
            <person name="Omura Y."/>
            <person name="Abe K."/>
            <person name="Kamihara K."/>
            <person name="Katsuta N."/>
            <person name="Sato K."/>
            <person name="Tanikawa M."/>
            <person name="Yamazaki M."/>
            <person name="Ninomiya K."/>
            <person name="Ishibashi T."/>
            <person name="Yamashita H."/>
            <person name="Murakawa K."/>
            <person name="Fujimori K."/>
            <person name="Tanai H."/>
            <person name="Kimata M."/>
            <person name="Watanabe M."/>
            <person name="Hiraoka S."/>
            <person name="Chiba Y."/>
            <person name="Ishida S."/>
            <person name="Ono Y."/>
            <person name="Takiguchi S."/>
            <person name="Watanabe S."/>
            <person name="Yosida M."/>
            <person name="Hotuta T."/>
            <person name="Kusano J."/>
            <person name="Kanehori K."/>
            <person name="Takahashi-Fujii A."/>
            <person name="Hara H."/>
            <person name="Tanase T.-O."/>
            <person name="Nomura Y."/>
            <person name="Togiya S."/>
            <person name="Komai F."/>
            <person name="Hara R."/>
            <person name="Takeuchi K."/>
            <person name="Arita M."/>
            <person name="Imose N."/>
            <person name="Musashino K."/>
            <person name="Yuuki H."/>
            <person name="Oshima A."/>
            <person name="Sasaki N."/>
            <person name="Aotsuka S."/>
            <person name="Yoshikawa Y."/>
            <person name="Matsunawa H."/>
            <person name="Ichihara T."/>
            <person name="Shiohata N."/>
            <person name="Sano S."/>
            <person name="Moriya S."/>
            <person name="Momiyama H."/>
            <person name="Satoh N."/>
            <person name="Takami S."/>
            <person name="Terashima Y."/>
            <person name="Suzuki O."/>
            <person name="Nakagawa S."/>
            <person name="Senoh A."/>
            <person name="Mizoguchi H."/>
            <person name="Goto Y."/>
            <person name="Shimizu F."/>
            <person name="Wakebe H."/>
            <person name="Hishigaki H."/>
            <person name="Watanabe T."/>
            <person name="Sugiyama A."/>
            <person name="Takemoto M."/>
            <person name="Kawakami B."/>
            <person name="Yamazaki M."/>
            <person name="Watanabe K."/>
            <person name="Kumagai A."/>
            <person name="Itakura S."/>
            <person name="Fukuzumi Y."/>
            <person name="Fujimori Y."/>
            <person name="Komiyama M."/>
            <person name="Tashiro H."/>
            <person name="Tanigami A."/>
            <person name="Fujiwara T."/>
            <person name="Ono T."/>
            <person name="Yamada K."/>
            <person name="Fujii Y."/>
            <person name="Ozaki K."/>
            <person name="Hirao M."/>
            <person name="Ohmori Y."/>
            <person name="Kawabata A."/>
            <person name="Hikiji T."/>
            <person name="Kobatake N."/>
            <person name="Inagaki H."/>
            <person name="Ikema Y."/>
            <person name="Okamoto S."/>
            <person name="Okitani R."/>
            <person name="Kawakami T."/>
            <person name="Noguchi S."/>
            <person name="Itoh T."/>
            <person name="Shigeta K."/>
            <person name="Senba T."/>
            <person name="Matsumura K."/>
            <person name="Nakajima Y."/>
            <person name="Mizuno T."/>
            <person name="Morinaga M."/>
            <person name="Sasaki M."/>
            <person name="Togashi T."/>
            <person name="Oyama M."/>
            <person name="Hata H."/>
            <person name="Watanabe M."/>
            <person name="Komatsu T."/>
            <person name="Mizushima-Sugano J."/>
            <person name="Satoh T."/>
            <person name="Shirai Y."/>
            <person name="Takahashi Y."/>
            <person name="Nakagawa K."/>
            <person name="Okumura K."/>
            <person name="Nagase T."/>
            <person name="Nomura N."/>
            <person name="Kikuchi H."/>
            <person name="Masuho Y."/>
            <person name="Yamashita R."/>
            <person name="Nakai K."/>
            <person name="Yada T."/>
            <person name="Nakamura Y."/>
            <person name="Ohara O."/>
            <person name="Isogai T."/>
            <person name="Sugano S."/>
        </authorList>
    </citation>
    <scope>NUCLEOTIDE SEQUENCE [LARGE SCALE MRNA] (ISOFORM 2)</scope>
    <scope>VARIANT LYS-31</scope>
</reference>
<reference key="2">
    <citation type="journal article" date="2006" name="Nature">
        <title>Human chromosome 11 DNA sequence and analysis including novel gene identification.</title>
        <authorList>
            <person name="Taylor T.D."/>
            <person name="Noguchi H."/>
            <person name="Totoki Y."/>
            <person name="Toyoda A."/>
            <person name="Kuroki Y."/>
            <person name="Dewar K."/>
            <person name="Lloyd C."/>
            <person name="Itoh T."/>
            <person name="Takeda T."/>
            <person name="Kim D.-W."/>
            <person name="She X."/>
            <person name="Barlow K.F."/>
            <person name="Bloom T."/>
            <person name="Bruford E."/>
            <person name="Chang J.L."/>
            <person name="Cuomo C.A."/>
            <person name="Eichler E."/>
            <person name="FitzGerald M.G."/>
            <person name="Jaffe D.B."/>
            <person name="LaButti K."/>
            <person name="Nicol R."/>
            <person name="Park H.-S."/>
            <person name="Seaman C."/>
            <person name="Sougnez C."/>
            <person name="Yang X."/>
            <person name="Zimmer A.R."/>
            <person name="Zody M.C."/>
            <person name="Birren B.W."/>
            <person name="Nusbaum C."/>
            <person name="Fujiyama A."/>
            <person name="Hattori M."/>
            <person name="Rogers J."/>
            <person name="Lander E.S."/>
            <person name="Sakaki Y."/>
        </authorList>
    </citation>
    <scope>NUCLEOTIDE SEQUENCE [LARGE SCALE GENOMIC DNA]</scope>
</reference>
<reference key="3">
    <citation type="submission" date="2005-09" db="EMBL/GenBank/DDBJ databases">
        <authorList>
            <person name="Mural R.J."/>
            <person name="Istrail S."/>
            <person name="Sutton G.G."/>
            <person name="Florea L."/>
            <person name="Halpern A.L."/>
            <person name="Mobarry C.M."/>
            <person name="Lippert R."/>
            <person name="Walenz B."/>
            <person name="Shatkay H."/>
            <person name="Dew I."/>
            <person name="Miller J.R."/>
            <person name="Flanigan M.J."/>
            <person name="Edwards N.J."/>
            <person name="Bolanos R."/>
            <person name="Fasulo D."/>
            <person name="Halldorsson B.V."/>
            <person name="Hannenhalli S."/>
            <person name="Turner R."/>
            <person name="Yooseph S."/>
            <person name="Lu F."/>
            <person name="Nusskern D.R."/>
            <person name="Shue B.C."/>
            <person name="Zheng X.H."/>
            <person name="Zhong F."/>
            <person name="Delcher A.L."/>
            <person name="Huson D.H."/>
            <person name="Kravitz S.A."/>
            <person name="Mouchard L."/>
            <person name="Reinert K."/>
            <person name="Remington K.A."/>
            <person name="Clark A.G."/>
            <person name="Waterman M.S."/>
            <person name="Eichler E.E."/>
            <person name="Adams M.D."/>
            <person name="Hunkapiller M.W."/>
            <person name="Myers E.W."/>
            <person name="Venter J.C."/>
        </authorList>
    </citation>
    <scope>NUCLEOTIDE SEQUENCE [LARGE SCALE GENOMIC DNA]</scope>
</reference>
<reference key="4">
    <citation type="journal article" date="2004" name="Genome Res.">
        <title>The status, quality, and expansion of the NIH full-length cDNA project: the Mammalian Gene Collection (MGC).</title>
        <authorList>
            <consortium name="The MGC Project Team"/>
        </authorList>
    </citation>
    <scope>NUCLEOTIDE SEQUENCE [LARGE SCALE MRNA] (ISOFORMS 3 AND 4)</scope>
    <scope>VARIANT LYS-31</scope>
    <source>
        <tissue>Brain</tissue>
        <tissue>Testis</tissue>
    </source>
</reference>
<reference key="5">
    <citation type="journal article" date="2013" name="J. Proteome Res.">
        <title>Toward a comprehensive characterization of a human cancer cell phosphoproteome.</title>
        <authorList>
            <person name="Zhou H."/>
            <person name="Di Palma S."/>
            <person name="Preisinger C."/>
            <person name="Peng M."/>
            <person name="Polat A.N."/>
            <person name="Heck A.J."/>
            <person name="Mohammed S."/>
        </authorList>
    </citation>
    <scope>PHOSPHORYLATION [LARGE SCALE ANALYSIS] AT SER-358</scope>
    <scope>IDENTIFICATION BY MASS SPECTROMETRY [LARGE SCALE ANALYSIS]</scope>
    <source>
        <tissue>Erythroleukemia</tissue>
    </source>
</reference>
<reference key="6">
    <citation type="journal article" date="2019" name="Nucleic Acids Res.">
        <title>METTL15 introduces N4-methylcytidine into human mitochondrial 12S rRNA and is required for mitoribosome biogenesis.</title>
        <authorList>
            <person name="Van Haute L."/>
            <person name="Hendrick A.G."/>
            <person name="D'Souza A.R."/>
            <person name="Powell C.A."/>
            <person name="Rebelo-Guiomar P."/>
            <person name="Harbour M.E."/>
            <person name="Ding S."/>
            <person name="Fearnley I.M."/>
            <person name="Andrews B."/>
            <person name="Minczuk M."/>
        </authorList>
    </citation>
    <scope>FUNCTION</scope>
    <scope>SUBCELLULAR LOCATION</scope>
    <scope>CATALYTIC ACTIVITY</scope>
    <scope>MUTAGENESIS OF 119-ASP-ARG-120 AND GLU-298</scope>
</reference>
<reference key="7">
    <citation type="journal article" date="2020" name="J. Biol. Chem.">
        <title>The human mitochondrial 12S rRNA m4C methyltransferase METTL15 is required for mitochondrial function.</title>
        <authorList>
            <person name="Chen H."/>
            <person name="Shi Z."/>
            <person name="Guo J."/>
            <person name="Chang K.J."/>
            <person name="Chen Q."/>
            <person name="Yao C.H."/>
            <person name="Haigis M.C."/>
            <person name="Shi Y."/>
        </authorList>
    </citation>
    <scope>FUNCTION</scope>
    <scope>CATALYTIC ACTIVITY</scope>
    <scope>SUBCELLULAR LOCATION</scope>
    <scope>MUTAGENESIS OF 98-GLY--GLY-101</scope>
</reference>
<feature type="transit peptide" description="Mitochondrion" evidence="2">
    <location>
        <begin position="1"/>
        <end status="unknown"/>
    </location>
</feature>
<feature type="chain" id="PRO_0000308332" description="12S rRNA N(4)-cytidine methyltransferase METTL15">
    <location>
        <begin status="unknown"/>
        <end position="407"/>
    </location>
</feature>
<feature type="binding site" evidence="1">
    <location>
        <begin position="100"/>
        <end position="102"/>
    </location>
    <ligand>
        <name>S-adenosyl-L-methionine</name>
        <dbReference type="ChEBI" id="CHEBI:59789"/>
    </ligand>
</feature>
<feature type="binding site" evidence="1">
    <location>
        <position position="119"/>
    </location>
    <ligand>
        <name>S-adenosyl-L-methionine</name>
        <dbReference type="ChEBI" id="CHEBI:59789"/>
    </ligand>
</feature>
<feature type="binding site" evidence="1">
    <location>
        <position position="146"/>
    </location>
    <ligand>
        <name>S-adenosyl-L-methionine</name>
        <dbReference type="ChEBI" id="CHEBI:59789"/>
    </ligand>
</feature>
<feature type="binding site" evidence="1">
    <location>
        <position position="169"/>
    </location>
    <ligand>
        <name>S-adenosyl-L-methionine</name>
        <dbReference type="ChEBI" id="CHEBI:59789"/>
    </ligand>
</feature>
<feature type="binding site" evidence="1">
    <location>
        <position position="176"/>
    </location>
    <ligand>
        <name>S-adenosyl-L-methionine</name>
        <dbReference type="ChEBI" id="CHEBI:59789"/>
    </ligand>
</feature>
<feature type="modified residue" description="Phosphoserine" evidence="12">
    <location>
        <position position="358"/>
    </location>
</feature>
<feature type="splice variant" id="VSP_028970" description="In isoform 3." evidence="8">
    <original>IFLDMTFGS</original>
    <variation>SLGVRSVGI</variation>
    <location>
        <begin position="91"/>
        <end position="99"/>
    </location>
</feature>
<feature type="splice variant" id="VSP_028971" description="In isoform 3." evidence="8">
    <location>
        <begin position="100"/>
        <end position="407"/>
    </location>
</feature>
<feature type="splice variant" id="VSP_028972" description="In isoform 4." evidence="8">
    <original>YPDMPTAADVVNALDQQALASILRTYGEEKHAKKIASAIVQARSIYPITRTQQLASIVAGAFPPSAIYTRKDLLQRSTHIATKTFQALRIFVNNELNELYTGLKTAQKFLRPGGRLVALS</original>
    <variation>STGTCIYPKNIRGGEACQENRFSNCSGTQHLPHHQNPAACQHRCRSISSLCYLYTERLTTAIYPYCHQDFPGSSHICEQ</variation>
    <location>
        <begin position="201"/>
        <end position="320"/>
    </location>
</feature>
<feature type="splice variant" id="VSP_028973" description="In isoform 2." evidence="7">
    <original>GAFPPSAIYTRKDL</original>
    <variation>EYSETYFPVAQTLY</variation>
    <location>
        <begin position="260"/>
        <end position="273"/>
    </location>
</feature>
<feature type="splice variant" id="VSP_028974" description="In isoform 2." evidence="7">
    <location>
        <begin position="274"/>
        <end position="407"/>
    </location>
</feature>
<feature type="splice variant" id="VSP_028975" description="In isoform 4." evidence="8">
    <location>
        <begin position="321"/>
        <end position="407"/>
    </location>
</feature>
<feature type="sequence variant" id="VAR_036801" description="In dbSNP:rs2883478." evidence="3 4">
    <original>N</original>
    <variation>K</variation>
    <location>
        <position position="31"/>
    </location>
</feature>
<feature type="sequence variant" id="VAR_036802" description="In dbSNP:rs11823114.">
    <original>A</original>
    <variation>T</variation>
    <location>
        <position position="149"/>
    </location>
</feature>
<feature type="sequence variant" id="VAR_059446" description="In dbSNP:rs11030280.">
    <original>I</original>
    <variation>F</variation>
    <location>
        <position position="267"/>
    </location>
</feature>
<feature type="mutagenesis site" description="Abolished methylation of 12S rRNA position C839." evidence="6">
    <original>GSGG</original>
    <variation>ASAA</variation>
    <location>
        <begin position="98"/>
        <end position="101"/>
    </location>
</feature>
<feature type="mutagenesis site" description="Absence of methylation of 12S rRNA position C839 and decreased methylation at position C841." evidence="5">
    <original>DR</original>
    <variation>AA</variation>
    <location>
        <begin position="119"/>
        <end position="120"/>
    </location>
</feature>
<feature type="mutagenesis site" description="Decreased methylation of 12S rRNA positions C839 and C841." evidence="5">
    <original>E</original>
    <variation>A</variation>
    <location>
        <position position="298"/>
    </location>
</feature>
<feature type="sequence conflict" description="In Ref. 4; AAH30997." evidence="10" ref="4">
    <original>P</original>
    <variation>S</variation>
    <location>
        <position position="191"/>
    </location>
</feature>
<feature type="sequence conflict" description="In Ref. 1; BAC03631." evidence="10" ref="1">
    <original>M</original>
    <variation>V</variation>
    <location>
        <position position="194"/>
    </location>
</feature>
<feature type="helix" evidence="13">
    <location>
        <begin position="77"/>
        <end position="84"/>
    </location>
</feature>
<feature type="strand" evidence="13">
    <location>
        <begin position="90"/>
        <end position="95"/>
    </location>
</feature>
<feature type="helix" evidence="13">
    <location>
        <begin position="101"/>
        <end position="109"/>
    </location>
</feature>
<feature type="strand" evidence="13">
    <location>
        <begin position="112"/>
        <end position="121"/>
    </location>
</feature>
<feature type="helix" evidence="13">
    <location>
        <begin position="122"/>
        <end position="134"/>
    </location>
</feature>
<feature type="turn" evidence="13">
    <location>
        <begin position="136"/>
        <end position="138"/>
    </location>
</feature>
<feature type="strand" evidence="13">
    <location>
        <begin position="139"/>
        <end position="143"/>
    </location>
</feature>
<feature type="helix" evidence="13">
    <location>
        <begin position="146"/>
        <end position="155"/>
    </location>
</feature>
<feature type="strand" evidence="13">
    <location>
        <begin position="163"/>
        <end position="169"/>
    </location>
</feature>
<feature type="helix" evidence="13">
    <location>
        <begin position="174"/>
        <end position="178"/>
    </location>
</feature>
<feature type="helix" evidence="13">
    <location>
        <begin position="180"/>
        <end position="182"/>
    </location>
</feature>
<feature type="strand" evidence="13">
    <location>
        <begin position="186"/>
        <end position="188"/>
    </location>
</feature>
<feature type="turn" evidence="13">
    <location>
        <begin position="196"/>
        <end position="199"/>
    </location>
</feature>
<feature type="helix" evidence="13">
    <location>
        <begin position="207"/>
        <end position="213"/>
    </location>
</feature>
<feature type="helix" evidence="13">
    <location>
        <begin position="216"/>
        <end position="227"/>
    </location>
</feature>
<feature type="helix" evidence="13">
    <location>
        <begin position="232"/>
        <end position="243"/>
    </location>
</feature>
<feature type="helix" evidence="13">
    <location>
        <begin position="251"/>
        <end position="260"/>
    </location>
</feature>
<feature type="helix" evidence="13">
    <location>
        <begin position="264"/>
        <end position="267"/>
    </location>
</feature>
<feature type="helix" evidence="13">
    <location>
        <begin position="271"/>
        <end position="274"/>
    </location>
</feature>
<feature type="turn" evidence="13">
    <location>
        <begin position="276"/>
        <end position="278"/>
    </location>
</feature>
<feature type="helix" evidence="13">
    <location>
        <begin position="282"/>
        <end position="293"/>
    </location>
</feature>
<feature type="helix" evidence="13">
    <location>
        <begin position="295"/>
        <end position="309"/>
    </location>
</feature>
<feature type="strand" evidence="13">
    <location>
        <begin position="310"/>
        <end position="320"/>
    </location>
</feature>
<feature type="helix" evidence="13">
    <location>
        <begin position="323"/>
        <end position="333"/>
    </location>
</feature>
<feature type="helix" evidence="13">
    <location>
        <begin position="341"/>
        <end position="343"/>
    </location>
</feature>
<feature type="helix" evidence="13">
    <location>
        <begin position="346"/>
        <end position="351"/>
    </location>
</feature>
<feature type="strand" evidence="13">
    <location>
        <begin position="375"/>
        <end position="382"/>
    </location>
</feature>
<feature type="helix" evidence="14">
    <location>
        <begin position="387"/>
        <end position="392"/>
    </location>
</feature>
<feature type="helix" evidence="14">
    <location>
        <begin position="394"/>
        <end position="396"/>
    </location>
</feature>
<feature type="strand" evidence="13">
    <location>
        <begin position="400"/>
        <end position="406"/>
    </location>
</feature>
<keyword id="KW-0002">3D-structure</keyword>
<keyword id="KW-0025">Alternative splicing</keyword>
<keyword id="KW-0489">Methyltransferase</keyword>
<keyword id="KW-0496">Mitochondrion</keyword>
<keyword id="KW-0597">Phosphoprotein</keyword>
<keyword id="KW-1267">Proteomics identification</keyword>
<keyword id="KW-1185">Reference proteome</keyword>
<keyword id="KW-0949">S-adenosyl-L-methionine</keyword>
<keyword id="KW-0808">Transferase</keyword>
<keyword id="KW-0809">Transit peptide</keyword>
<sequence>MLRYPYFCRMYKECLSCWLESGIPNLGVWPNRIHTTAEKYREYEAREQTDQTQAQELHRSQDRDFETMAKLHIPVMVDEVVHCLSPQKGQIFLDMTFGSGGHTKAILQKESDIVLYALDRDPTAYALAEHLSELYPKQIRAMLGQFSQAEALLMKAGVQPGTFDGVLMDLGCSSMQLDTPERGFSLRKDGPLDMRMDGGRYPDMPTAADVVNALDQQALASILRTYGEEKHAKKIASAIVQARSIYPITRTQQLASIVAGAFPPSAIYTRKDLLQRSTHIATKTFQALRIFVNNELNELYTGLKTAQKFLRPGGRLVALSFHSLEDRIVKRFLLGISMTERFNLSVRQQVMKTSQLGSDHENTEEVSMRRAPLMWELIHKKVLSPQDQDVQDNPRGRSAKLRAAIKL</sequence>
<comment type="function">
    <text evidence="5 6">N4-methylcytidine (m4C) methyltransferase responsible for the methylation of position C839 in mitochondrial 12S rRNA (PubMed:31665743, PubMed:32371392). Involved in the stabilization of 12S rRNA folding, therefore facilitating the assembly of the mitochondrial small ribosomal subunits (PubMed:31665743, PubMed:32371392).</text>
</comment>
<comment type="catalytic activity">
    <reaction evidence="5 6">
        <text>cytidine(839) in 12S rRNA + S-adenosyl-L-methionine = N(4)-methylcytidine(839) in 12S rRNA + S-adenosyl-L-homocysteine + H(+)</text>
        <dbReference type="Rhea" id="RHEA:62524"/>
        <dbReference type="Rhea" id="RHEA-COMP:16109"/>
        <dbReference type="Rhea" id="RHEA-COMP:16110"/>
        <dbReference type="ChEBI" id="CHEBI:15378"/>
        <dbReference type="ChEBI" id="CHEBI:57856"/>
        <dbReference type="ChEBI" id="CHEBI:59789"/>
        <dbReference type="ChEBI" id="CHEBI:74506"/>
        <dbReference type="ChEBI" id="CHEBI:82748"/>
    </reaction>
    <physiologicalReaction direction="left-to-right" evidence="5 6">
        <dbReference type="Rhea" id="RHEA:62525"/>
    </physiologicalReaction>
</comment>
<comment type="interaction">
    <interactant intactId="EBI-10742528">
        <id>A6NJ78</id>
    </interactant>
    <interactant intactId="EBI-6149062">
        <id>Q9H7P6</id>
        <label>MVB12B</label>
    </interactant>
    <organismsDiffer>false</organismsDiffer>
    <experiments>2</experiments>
</comment>
<comment type="interaction">
    <interactant intactId="EBI-10174029">
        <id>A6NJ78-4</id>
    </interactant>
    <interactant intactId="EBI-718729">
        <id>P55212</id>
        <label>CASP6</label>
    </interactant>
    <organismsDiffer>false</organismsDiffer>
    <experiments>3</experiments>
</comment>
<comment type="interaction">
    <interactant intactId="EBI-10174029">
        <id>A6NJ78-4</id>
    </interactant>
    <interactant intactId="EBI-14151404">
        <id>Q96AQ7</id>
        <label>CIDEC</label>
    </interactant>
    <organismsDiffer>false</organismsDiffer>
    <experiments>3</experiments>
</comment>
<comment type="interaction">
    <interactant intactId="EBI-10174029">
        <id>A6NJ78-4</id>
    </interactant>
    <interactant intactId="EBI-711360">
        <id>P33240</id>
        <label>CSTF2</label>
    </interactant>
    <organismsDiffer>false</organismsDiffer>
    <experiments>3</experiments>
</comment>
<comment type="interaction">
    <interactant intactId="EBI-10174029">
        <id>A6NJ78-4</id>
    </interactant>
    <interactant intactId="EBI-10976677">
        <id>G5E9A7</id>
        <label>DMWD</label>
    </interactant>
    <organismsDiffer>false</organismsDiffer>
    <experiments>3</experiments>
</comment>
<comment type="interaction">
    <interactant intactId="EBI-10174029">
        <id>A6NJ78-4</id>
    </interactant>
    <interactant intactId="EBI-1054228">
        <id>P41091</id>
        <label>EIF2S3</label>
    </interactant>
    <organismsDiffer>false</organismsDiffer>
    <experiments>3</experiments>
</comment>
<comment type="interaction">
    <interactant intactId="EBI-10174029">
        <id>A6NJ78-4</id>
    </interactant>
    <interactant intactId="EBI-2339898">
        <id>Q9NW38</id>
        <label>FANCL</label>
    </interactant>
    <organismsDiffer>false</organismsDiffer>
    <experiments>3</experiments>
</comment>
<comment type="interaction">
    <interactant intactId="EBI-10174029">
        <id>A6NJ78-4</id>
    </interactant>
    <interactant intactId="EBI-10226858">
        <id>Q0VDC6</id>
        <label>FKBP1A</label>
    </interactant>
    <organismsDiffer>false</organismsDiffer>
    <experiments>3</experiments>
</comment>
<comment type="interaction">
    <interactant intactId="EBI-10174029">
        <id>A6NJ78-4</id>
    </interactant>
    <interactant intactId="EBI-748515">
        <id>Q8IVS8</id>
        <label>GLYCTK</label>
    </interactant>
    <organismsDiffer>false</organismsDiffer>
    <experiments>3</experiments>
</comment>
<comment type="interaction">
    <interactant intactId="EBI-10174029">
        <id>A6NJ78-4</id>
    </interactant>
    <interactant intactId="EBI-1752118">
        <id>P31273</id>
        <label>HOXC8</label>
    </interactant>
    <organismsDiffer>false</organismsDiffer>
    <experiments>3</experiments>
</comment>
<comment type="interaction">
    <interactant intactId="EBI-10174029">
        <id>A6NJ78-4</id>
    </interactant>
    <interactant intactId="EBI-21591415">
        <id>P13473-2</id>
        <label>LAMP2</label>
    </interactant>
    <organismsDiffer>false</organismsDiffer>
    <experiments>3</experiments>
</comment>
<comment type="interaction">
    <interactant intactId="EBI-10174029">
        <id>A6NJ78-4</id>
    </interactant>
    <interactant intactId="EBI-947402">
        <id>O60336</id>
        <label>MAPKBP1</label>
    </interactant>
    <organismsDiffer>false</organismsDiffer>
    <experiments>3</experiments>
</comment>
<comment type="interaction">
    <interactant intactId="EBI-10174029">
        <id>A6NJ78-4</id>
    </interactant>
    <interactant intactId="EBI-10699187">
        <id>Q8IXL7-2</id>
        <label>MSRB3</label>
    </interactant>
    <organismsDiffer>false</organismsDiffer>
    <experiments>3</experiments>
</comment>
<comment type="interaction">
    <interactant intactId="EBI-10174029">
        <id>A6NJ78-4</id>
    </interactant>
    <interactant intactId="EBI-11750983">
        <id>Q9HC98-4</id>
        <label>NEK6</label>
    </interactant>
    <organismsDiffer>false</organismsDiffer>
    <experiments>3</experiments>
</comment>
<comment type="interaction">
    <interactant intactId="EBI-10174029">
        <id>A6NJ78-4</id>
    </interactant>
    <interactant intactId="EBI-724639">
        <id>Q9UBV8</id>
        <label>PEF1</label>
    </interactant>
    <organismsDiffer>false</organismsDiffer>
    <experiments>3</experiments>
</comment>
<comment type="interaction">
    <interactant intactId="EBI-10174029">
        <id>A6NJ78-4</id>
    </interactant>
    <interactant intactId="EBI-9027467">
        <id>O75360</id>
        <label>PROP1</label>
    </interactant>
    <organismsDiffer>false</organismsDiffer>
    <experiments>3</experiments>
</comment>
<comment type="interaction">
    <interactant intactId="EBI-10174029">
        <id>A6NJ78-4</id>
    </interactant>
    <interactant intactId="EBI-286642">
        <id>P62826</id>
        <label>RAN</label>
    </interactant>
    <organismsDiffer>false</organismsDiffer>
    <experiments>3</experiments>
</comment>
<comment type="interaction">
    <interactant intactId="EBI-10174029">
        <id>A6NJ78-4</id>
    </interactant>
    <interactant intactId="EBI-1053431">
        <id>P49591</id>
        <label>SARS1</label>
    </interactant>
    <organismsDiffer>false</organismsDiffer>
    <experiments>3</experiments>
</comment>
<comment type="interaction">
    <interactant intactId="EBI-10174029">
        <id>A6NJ78-4</id>
    </interactant>
    <interactant intactId="EBI-11959123">
        <id>Q99932-2</id>
        <label>SPAG8</label>
    </interactant>
    <organismsDiffer>false</organismsDiffer>
    <experiments>3</experiments>
</comment>
<comment type="interaction">
    <interactant intactId="EBI-10174029">
        <id>A6NJ78-4</id>
    </interactant>
    <interactant intactId="EBI-5235340">
        <id>Q7Z699</id>
        <label>SPRED1</label>
    </interactant>
    <organismsDiffer>false</organismsDiffer>
    <experiments>3</experiments>
</comment>
<comment type="interaction">
    <interactant intactId="EBI-10174029">
        <id>A6NJ78-4</id>
    </interactant>
    <interactant intactId="EBI-358993">
        <id>Q15645</id>
        <label>TRIP13</label>
    </interactant>
    <organismsDiffer>false</organismsDiffer>
    <experiments>6</experiments>
</comment>
<comment type="interaction">
    <interactant intactId="EBI-10174029">
        <id>A6NJ78-4</id>
    </interactant>
    <interactant intactId="EBI-739895">
        <id>Q8N6Y0</id>
        <label>USHBP1</label>
    </interactant>
    <organismsDiffer>false</organismsDiffer>
    <experiments>3</experiments>
</comment>
<comment type="interaction">
    <interactant intactId="EBI-10174029">
        <id>A6NJ78-4</id>
    </interactant>
    <interactant intactId="EBI-2107455">
        <id>Q08AM6</id>
        <label>VAC14</label>
    </interactant>
    <organismsDiffer>false</organismsDiffer>
    <experiments>3</experiments>
</comment>
<comment type="subcellular location">
    <subcellularLocation>
        <location evidence="5 6">Mitochondrion matrix</location>
    </subcellularLocation>
</comment>
<comment type="alternative products">
    <event type="alternative splicing"/>
    <isoform>
        <id>A6NJ78-1</id>
        <name>1</name>
        <sequence type="displayed"/>
    </isoform>
    <isoform>
        <id>A6NJ78-2</id>
        <name>2</name>
        <sequence type="described" ref="VSP_028973 VSP_028974"/>
    </isoform>
    <isoform>
        <id>A6NJ78-3</id>
        <name>3</name>
        <sequence type="described" ref="VSP_028970 VSP_028971"/>
    </isoform>
    <isoform>
        <id>A6NJ78-4</id>
        <name>4</name>
        <sequence type="described" ref="VSP_028972 VSP_028975"/>
    </isoform>
</comment>
<comment type="similarity">
    <text evidence="10">Belongs to the methyltransferase superfamily. RsmH family.</text>
</comment>
<comment type="sequence caution" evidence="10">
    <conflict type="erroneous initiation">
        <sequence resource="EMBL-CDS" id="AAH30997"/>
    </conflict>
    <text>Truncated N-terminus.</text>
</comment>
<dbReference type="EC" id="2.1.1.-" evidence="5 6"/>
<dbReference type="EMBL" id="AK091298">
    <property type="protein sequence ID" value="BAC03631.1"/>
    <property type="molecule type" value="mRNA"/>
</dbReference>
<dbReference type="EMBL" id="AC023206">
    <property type="status" value="NOT_ANNOTATED_CDS"/>
    <property type="molecule type" value="Genomic_DNA"/>
</dbReference>
<dbReference type="EMBL" id="AC087376">
    <property type="status" value="NOT_ANNOTATED_CDS"/>
    <property type="molecule type" value="Genomic_DNA"/>
</dbReference>
<dbReference type="EMBL" id="CH471064">
    <property type="protein sequence ID" value="EAW68267.1"/>
    <property type="molecule type" value="Genomic_DNA"/>
</dbReference>
<dbReference type="EMBL" id="CH471064">
    <property type="protein sequence ID" value="EAW68266.1"/>
    <property type="molecule type" value="Genomic_DNA"/>
</dbReference>
<dbReference type="EMBL" id="BC030997">
    <property type="protein sequence ID" value="AAH30997.1"/>
    <property type="status" value="ALT_INIT"/>
    <property type="molecule type" value="mRNA"/>
</dbReference>
<dbReference type="EMBL" id="BC105287">
    <property type="protein sequence ID" value="AAI05288.1"/>
    <property type="molecule type" value="mRNA"/>
</dbReference>
<dbReference type="CCDS" id="CCDS31450.1">
    <molecule id="A6NJ78-2"/>
</dbReference>
<dbReference type="CCDS" id="CCDS44559.1">
    <molecule id="A6NJ78-1"/>
</dbReference>
<dbReference type="CCDS" id="CCDS73269.1">
    <molecule id="A6NJ78-4"/>
</dbReference>
<dbReference type="RefSeq" id="NP_001107000.1">
    <molecule id="A6NJ78-1"/>
    <property type="nucleotide sequence ID" value="NM_001113528.2"/>
</dbReference>
<dbReference type="RefSeq" id="NP_001284704.1">
    <molecule id="A6NJ78-4"/>
    <property type="nucleotide sequence ID" value="NM_001297775.2"/>
</dbReference>
<dbReference type="RefSeq" id="NP_689849.2">
    <molecule id="A6NJ78-2"/>
    <property type="nucleotide sequence ID" value="NM_152636.3"/>
</dbReference>
<dbReference type="RefSeq" id="XP_016872786.1">
    <property type="nucleotide sequence ID" value="XM_017017297.1"/>
</dbReference>
<dbReference type="PDB" id="7PNX">
    <property type="method" value="EM"/>
    <property type="resolution" value="2.76 A"/>
    <property type="chains" value="b=1-407"/>
</dbReference>
<dbReference type="PDB" id="7PNY">
    <property type="method" value="EM"/>
    <property type="resolution" value="3.06 A"/>
    <property type="chains" value="b=1-407"/>
</dbReference>
<dbReference type="PDB" id="7PNZ">
    <property type="method" value="EM"/>
    <property type="resolution" value="3.09 A"/>
    <property type="chains" value="b=1-407"/>
</dbReference>
<dbReference type="PDB" id="8IPI">
    <property type="method" value="X-ray"/>
    <property type="resolution" value="2.10 A"/>
    <property type="chains" value="A=70-407"/>
</dbReference>
<dbReference type="PDB" id="8IPK">
    <property type="method" value="X-ray"/>
    <property type="resolution" value="1.90 A"/>
    <property type="chains" value="A=70-407"/>
</dbReference>
<dbReference type="PDB" id="8IPL">
    <property type="method" value="X-ray"/>
    <property type="resolution" value="2.20 A"/>
    <property type="chains" value="A=70-407"/>
</dbReference>
<dbReference type="PDB" id="8IPM">
    <property type="method" value="X-ray"/>
    <property type="resolution" value="3.10 A"/>
    <property type="chains" value="D=70-407"/>
</dbReference>
<dbReference type="PDB" id="8QRL">
    <property type="method" value="EM"/>
    <property type="resolution" value="3.34 A"/>
    <property type="chains" value="8=1-407"/>
</dbReference>
<dbReference type="PDBsum" id="7PNX"/>
<dbReference type="PDBsum" id="7PNY"/>
<dbReference type="PDBsum" id="7PNZ"/>
<dbReference type="PDBsum" id="8IPI"/>
<dbReference type="PDBsum" id="8IPK"/>
<dbReference type="PDBsum" id="8IPL"/>
<dbReference type="PDBsum" id="8IPM"/>
<dbReference type="PDBsum" id="8QRL"/>
<dbReference type="EMDB" id="EMD-13555"/>
<dbReference type="EMDB" id="EMD-13556"/>
<dbReference type="EMDB" id="EMD-13557"/>
<dbReference type="SMR" id="A6NJ78"/>
<dbReference type="BioGRID" id="128190">
    <property type="interactions" value="303"/>
</dbReference>
<dbReference type="FunCoup" id="A6NJ78">
    <property type="interactions" value="1528"/>
</dbReference>
<dbReference type="IntAct" id="A6NJ78">
    <property type="interactions" value="95"/>
</dbReference>
<dbReference type="STRING" id="9606.ENSP00000384369"/>
<dbReference type="GlyCosmos" id="A6NJ78">
    <property type="glycosylation" value="1 site, 1 glycan"/>
</dbReference>
<dbReference type="GlyGen" id="A6NJ78">
    <property type="glycosylation" value="1 site, 1 O-linked glycan (1 site)"/>
</dbReference>
<dbReference type="iPTMnet" id="A6NJ78"/>
<dbReference type="PhosphoSitePlus" id="A6NJ78"/>
<dbReference type="BioMuta" id="METTL15"/>
<dbReference type="jPOST" id="A6NJ78"/>
<dbReference type="MassIVE" id="A6NJ78"/>
<dbReference type="PaxDb" id="9606-ENSP00000384369"/>
<dbReference type="PeptideAtlas" id="A6NJ78"/>
<dbReference type="ProteomicsDB" id="1313">
    <molecule id="A6NJ78-1"/>
</dbReference>
<dbReference type="ProteomicsDB" id="1314">
    <molecule id="A6NJ78-2"/>
</dbReference>
<dbReference type="ProteomicsDB" id="1315">
    <molecule id="A6NJ78-3"/>
</dbReference>
<dbReference type="ProteomicsDB" id="1316">
    <molecule id="A6NJ78-4"/>
</dbReference>
<dbReference type="Pumba" id="A6NJ78"/>
<dbReference type="Antibodypedia" id="25483">
    <property type="antibodies" value="40 antibodies from 14 providers"/>
</dbReference>
<dbReference type="DNASU" id="196074"/>
<dbReference type="Ensembl" id="ENST00000303459.10">
    <molecule id="A6NJ78-2"/>
    <property type="protein sequence ID" value="ENSP00000307251.6"/>
    <property type="gene ID" value="ENSG00000169519.21"/>
</dbReference>
<dbReference type="Ensembl" id="ENST00000406787.7">
    <molecule id="A6NJ78-4"/>
    <property type="protein sequence ID" value="ENSP00000385507.3"/>
    <property type="gene ID" value="ENSG00000169519.21"/>
</dbReference>
<dbReference type="Ensembl" id="ENST00000407364.8">
    <molecule id="A6NJ78-1"/>
    <property type="protein sequence ID" value="ENSP00000384369.3"/>
    <property type="gene ID" value="ENSG00000169519.21"/>
</dbReference>
<dbReference type="Ensembl" id="ENST00000437814.1">
    <molecule id="A6NJ78-3"/>
    <property type="protein sequence ID" value="ENSP00000392806.1"/>
    <property type="gene ID" value="ENSG00000169519.21"/>
</dbReference>
<dbReference type="GeneID" id="196074"/>
<dbReference type="KEGG" id="hsa:196074"/>
<dbReference type="MANE-Select" id="ENST00000407364.8">
    <property type="protein sequence ID" value="ENSP00000384369.3"/>
    <property type="RefSeq nucleotide sequence ID" value="NM_001113528.2"/>
    <property type="RefSeq protein sequence ID" value="NP_001107000.1"/>
</dbReference>
<dbReference type="UCSC" id="uc001mse.3">
    <molecule id="A6NJ78-1"/>
    <property type="organism name" value="human"/>
</dbReference>
<dbReference type="AGR" id="HGNC:26606"/>
<dbReference type="CTD" id="196074"/>
<dbReference type="DisGeNET" id="196074"/>
<dbReference type="GeneCards" id="METTL15"/>
<dbReference type="HGNC" id="HGNC:26606">
    <property type="gene designation" value="METTL15"/>
</dbReference>
<dbReference type="HPA" id="ENSG00000169519">
    <property type="expression patterns" value="Low tissue specificity"/>
</dbReference>
<dbReference type="MIM" id="618711">
    <property type="type" value="gene"/>
</dbReference>
<dbReference type="neXtProt" id="NX_A6NJ78"/>
<dbReference type="OpenTargets" id="ENSG00000169519"/>
<dbReference type="PharmGKB" id="PA142671458"/>
<dbReference type="VEuPathDB" id="HostDB:ENSG00000169519"/>
<dbReference type="eggNOG" id="KOG2782">
    <property type="taxonomic scope" value="Eukaryota"/>
</dbReference>
<dbReference type="GeneTree" id="ENSGT00390000014756"/>
<dbReference type="HOGENOM" id="CLU_038422_1_0_1"/>
<dbReference type="InParanoid" id="A6NJ78"/>
<dbReference type="OMA" id="NPAKRTF"/>
<dbReference type="OrthoDB" id="16290at2759"/>
<dbReference type="PAN-GO" id="A6NJ78">
    <property type="GO annotations" value="2 GO annotations based on evolutionary models"/>
</dbReference>
<dbReference type="PhylomeDB" id="A6NJ78"/>
<dbReference type="TreeFam" id="TF106425"/>
<dbReference type="PathwayCommons" id="A6NJ78"/>
<dbReference type="SignaLink" id="A6NJ78"/>
<dbReference type="BioGRID-ORCS" id="196074">
    <property type="hits" value="79 hits in 1120 CRISPR screens"/>
</dbReference>
<dbReference type="ChiTaRS" id="METTL15">
    <property type="organism name" value="human"/>
</dbReference>
<dbReference type="GenomeRNAi" id="196074"/>
<dbReference type="Pharos" id="A6NJ78">
    <property type="development level" value="Tdark"/>
</dbReference>
<dbReference type="PRO" id="PR:A6NJ78"/>
<dbReference type="Proteomes" id="UP000005640">
    <property type="component" value="Chromosome 11"/>
</dbReference>
<dbReference type="RNAct" id="A6NJ78">
    <property type="molecule type" value="protein"/>
</dbReference>
<dbReference type="Bgee" id="ENSG00000169519">
    <property type="expression patterns" value="Expressed in adrenal tissue and 177 other cell types or tissues"/>
</dbReference>
<dbReference type="ExpressionAtlas" id="A6NJ78">
    <property type="expression patterns" value="baseline and differential"/>
</dbReference>
<dbReference type="GO" id="GO:0005759">
    <property type="term" value="C:mitochondrial matrix"/>
    <property type="evidence" value="ECO:0000314"/>
    <property type="project" value="UniProtKB"/>
</dbReference>
<dbReference type="GO" id="GO:0005739">
    <property type="term" value="C:mitochondrion"/>
    <property type="evidence" value="ECO:0000314"/>
    <property type="project" value="UniProtKB"/>
</dbReference>
<dbReference type="GO" id="GO:0071424">
    <property type="term" value="F:rRNA (cytosine-N4-)-methyltransferase activity"/>
    <property type="evidence" value="ECO:0000314"/>
    <property type="project" value="UniProtKB"/>
</dbReference>
<dbReference type="GO" id="GO:0070475">
    <property type="term" value="P:rRNA base methylation"/>
    <property type="evidence" value="ECO:0000314"/>
    <property type="project" value="UniProtKB"/>
</dbReference>
<dbReference type="FunFam" id="3.40.50.150:FF:000776">
    <property type="entry name" value="Methyltransferase like 15"/>
    <property type="match status" value="1"/>
</dbReference>
<dbReference type="FunFam" id="1.10.150.170:FF:000002">
    <property type="entry name" value="Probable methyltransferase-like protein 15"/>
    <property type="match status" value="1"/>
</dbReference>
<dbReference type="FunFam" id="3.40.50.150:FF:000226">
    <property type="entry name" value="probable methyltransferase-like protein 15 isoform X3"/>
    <property type="match status" value="1"/>
</dbReference>
<dbReference type="Gene3D" id="1.10.150.170">
    <property type="entry name" value="Putative methyltransferase TM0872, insert domain"/>
    <property type="match status" value="1"/>
</dbReference>
<dbReference type="Gene3D" id="3.40.50.150">
    <property type="entry name" value="Vaccinia Virus protein VP39"/>
    <property type="match status" value="1"/>
</dbReference>
<dbReference type="HAMAP" id="MF_01007">
    <property type="entry name" value="16SrRNA_methyltr_H"/>
    <property type="match status" value="1"/>
</dbReference>
<dbReference type="InterPro" id="IPR002903">
    <property type="entry name" value="RsmH"/>
</dbReference>
<dbReference type="InterPro" id="IPR023397">
    <property type="entry name" value="SAM-dep_MeTrfase_MraW_recog"/>
</dbReference>
<dbReference type="InterPro" id="IPR029063">
    <property type="entry name" value="SAM-dependent_MTases_sf"/>
</dbReference>
<dbReference type="NCBIfam" id="TIGR00006">
    <property type="entry name" value="16S rRNA (cytosine(1402)-N(4))-methyltransferase RsmH"/>
    <property type="match status" value="1"/>
</dbReference>
<dbReference type="PANTHER" id="PTHR11265:SF1">
    <property type="entry name" value="12S RRNA N4-METHYLCYTIDINE (M4C) METHYLTRANSFERASE-RELATED"/>
    <property type="match status" value="1"/>
</dbReference>
<dbReference type="PANTHER" id="PTHR11265">
    <property type="entry name" value="S-ADENOSYL-METHYLTRANSFERASE MRAW"/>
    <property type="match status" value="1"/>
</dbReference>
<dbReference type="Pfam" id="PF01795">
    <property type="entry name" value="Methyltransf_5"/>
    <property type="match status" value="1"/>
</dbReference>
<dbReference type="SUPFAM" id="SSF81799">
    <property type="entry name" value="Putative methyltransferase TM0872, insert domain"/>
    <property type="match status" value="1"/>
</dbReference>
<dbReference type="SUPFAM" id="SSF53335">
    <property type="entry name" value="S-adenosyl-L-methionine-dependent methyltransferases"/>
    <property type="match status" value="1"/>
</dbReference>
<accession>A6NJ78</accession>
<accession>A8MRS5</accession>
<accession>B7WNU2</accession>
<accession>Q3MHD3</accession>
<accession>Q8N601</accession>
<accession>Q8NBA7</accession>
<gene>
    <name evidence="9 11" type="primary">METTL15</name>
    <name type="synonym">METT5D1</name>
</gene>
<protein>
    <recommendedName>
        <fullName>12S rRNA N(4)-cytidine methyltransferase METTL15</fullName>
        <shortName>12S rRNA m4C methyltransferase</shortName>
        <ecNumber evidence="5 6">2.1.1.-</ecNumber>
    </recommendedName>
    <alternativeName>
        <fullName>Methyltransferase 5 domain-containing protein 1</fullName>
    </alternativeName>
    <alternativeName>
        <fullName>Methyltransferase-like protein 15</fullName>
    </alternativeName>
</protein>
<organism>
    <name type="scientific">Homo sapiens</name>
    <name type="common">Human</name>
    <dbReference type="NCBI Taxonomy" id="9606"/>
    <lineage>
        <taxon>Eukaryota</taxon>
        <taxon>Metazoa</taxon>
        <taxon>Chordata</taxon>
        <taxon>Craniata</taxon>
        <taxon>Vertebrata</taxon>
        <taxon>Euteleostomi</taxon>
        <taxon>Mammalia</taxon>
        <taxon>Eutheria</taxon>
        <taxon>Euarchontoglires</taxon>
        <taxon>Primates</taxon>
        <taxon>Haplorrhini</taxon>
        <taxon>Catarrhini</taxon>
        <taxon>Hominidae</taxon>
        <taxon>Homo</taxon>
    </lineage>
</organism>
<evidence type="ECO:0000250" key="1">
    <source>
        <dbReference type="UniProtKB" id="Q9WZX6"/>
    </source>
</evidence>
<evidence type="ECO:0000255" key="2"/>
<evidence type="ECO:0000269" key="3">
    <source>
    </source>
</evidence>
<evidence type="ECO:0000269" key="4">
    <source>
    </source>
</evidence>
<evidence type="ECO:0000269" key="5">
    <source>
    </source>
</evidence>
<evidence type="ECO:0000269" key="6">
    <source>
    </source>
</evidence>
<evidence type="ECO:0000303" key="7">
    <source>
    </source>
</evidence>
<evidence type="ECO:0000303" key="8">
    <source>
    </source>
</evidence>
<evidence type="ECO:0000303" key="9">
    <source>
    </source>
</evidence>
<evidence type="ECO:0000305" key="10"/>
<evidence type="ECO:0000312" key="11">
    <source>
        <dbReference type="HGNC" id="HGNC:26606"/>
    </source>
</evidence>
<evidence type="ECO:0007744" key="12">
    <source>
    </source>
</evidence>
<evidence type="ECO:0007829" key="13">
    <source>
        <dbReference type="PDB" id="8IPK"/>
    </source>
</evidence>
<evidence type="ECO:0007829" key="14">
    <source>
        <dbReference type="PDB" id="8QRL"/>
    </source>
</evidence>
<proteinExistence type="evidence at protein level"/>
<name>MET15_HUMAN</name>